<dbReference type="EMBL" id="AC009465">
    <property type="protein sequence ID" value="AAG51411.1"/>
    <property type="status" value="ALT_SEQ"/>
    <property type="molecule type" value="Genomic_DNA"/>
</dbReference>
<dbReference type="EMBL" id="CP002686">
    <property type="protein sequence ID" value="AEE74144.1"/>
    <property type="molecule type" value="Genomic_DNA"/>
</dbReference>
<dbReference type="EMBL" id="BT003926">
    <property type="protein sequence ID" value="AAO41973.1"/>
    <property type="molecule type" value="mRNA"/>
</dbReference>
<dbReference type="EMBL" id="BT005010">
    <property type="protein sequence ID" value="AAO50543.1"/>
    <property type="molecule type" value="mRNA"/>
</dbReference>
<dbReference type="RefSeq" id="NP_187136.3">
    <property type="nucleotide sequence ID" value="NM_111357.4"/>
</dbReference>
<dbReference type="SMR" id="Q84JZ8"/>
<dbReference type="FunCoup" id="Q84JZ8">
    <property type="interactions" value="23"/>
</dbReference>
<dbReference type="STRING" id="3702.Q84JZ8"/>
<dbReference type="PaxDb" id="3702-AT3G04850.1"/>
<dbReference type="EnsemblPlants" id="AT3G04850.1">
    <property type="protein sequence ID" value="AT3G04850.1"/>
    <property type="gene ID" value="AT3G04850"/>
</dbReference>
<dbReference type="GeneID" id="819645"/>
<dbReference type="Gramene" id="AT3G04850.1">
    <property type="protein sequence ID" value="AT3G04850.1"/>
    <property type="gene ID" value="AT3G04850"/>
</dbReference>
<dbReference type="KEGG" id="ath:AT3G04850"/>
<dbReference type="Araport" id="AT3G04850"/>
<dbReference type="TAIR" id="AT3G04850"/>
<dbReference type="eggNOG" id="KOG1171">
    <property type="taxonomic scope" value="Eukaryota"/>
</dbReference>
<dbReference type="HOGENOM" id="CLU_012297_1_0_1"/>
<dbReference type="InParanoid" id="Q84JZ8"/>
<dbReference type="OMA" id="EVIMFDV"/>
<dbReference type="OrthoDB" id="6283463at2759"/>
<dbReference type="PhylomeDB" id="Q84JZ8"/>
<dbReference type="PRO" id="PR:Q84JZ8"/>
<dbReference type="Proteomes" id="UP000006548">
    <property type="component" value="Chromosome 3"/>
</dbReference>
<dbReference type="ExpressionAtlas" id="Q84JZ8">
    <property type="expression patterns" value="baseline and differential"/>
</dbReference>
<dbReference type="GO" id="GO:0005634">
    <property type="term" value="C:nucleus"/>
    <property type="evidence" value="ECO:0007669"/>
    <property type="project" value="UniProtKB-SubCell"/>
</dbReference>
<dbReference type="GO" id="GO:0003700">
    <property type="term" value="F:DNA-binding transcription factor activity"/>
    <property type="evidence" value="ECO:0000250"/>
    <property type="project" value="TAIR"/>
</dbReference>
<dbReference type="GO" id="GO:0046872">
    <property type="term" value="F:metal ion binding"/>
    <property type="evidence" value="ECO:0007669"/>
    <property type="project" value="UniProtKB-KW"/>
</dbReference>
<dbReference type="GO" id="GO:0006355">
    <property type="term" value="P:regulation of DNA-templated transcription"/>
    <property type="evidence" value="ECO:0000304"/>
    <property type="project" value="TAIR"/>
</dbReference>
<dbReference type="InterPro" id="IPR005172">
    <property type="entry name" value="CRC"/>
</dbReference>
<dbReference type="InterPro" id="IPR033467">
    <property type="entry name" value="Tesmin/TSO1-like_CXC"/>
</dbReference>
<dbReference type="InterPro" id="IPR044522">
    <property type="entry name" value="TSO1-like"/>
</dbReference>
<dbReference type="PANTHER" id="PTHR46159">
    <property type="entry name" value="PROTEIN TESMIN/TSO1-LIKE CXC 2"/>
    <property type="match status" value="1"/>
</dbReference>
<dbReference type="PANTHER" id="PTHR46159:SF12">
    <property type="entry name" value="PROTEIN TESMIN_TSO1-LIKE CXC 3-RELATED"/>
    <property type="match status" value="1"/>
</dbReference>
<dbReference type="Pfam" id="PF03638">
    <property type="entry name" value="TCR"/>
    <property type="match status" value="2"/>
</dbReference>
<dbReference type="SMART" id="SM01114">
    <property type="entry name" value="CXC"/>
    <property type="match status" value="2"/>
</dbReference>
<dbReference type="PROSITE" id="PS51634">
    <property type="entry name" value="CRC"/>
    <property type="match status" value="1"/>
</dbReference>
<sequence length="639" mass="70974">MDTPDKNRISAVSFCNFEDSPVFQYINDLSPIEPVKPGRPENILHSLVFTSPSSSSSLFCSPQLNSYRDSRFFIKRHRSLDLSSPVVLIGETLKNSPDALWEEKLKCRPEKLENVSEPKPFKEQISLAIELANSLKHGRDGCDIQMVSCDEVPMDADDEIGSGGGSRELSDELCRQSFDPLDFDADSDGVLHTDEMEAESGFGKEVIMFDVADIQNYEQQIPRTTDPRFYSLASEPQQFSIYCNNSNYVEEREGSCSVQVAAGAPDINLSCSSKVAAIDSTAEAEDKEDKDLQPSGKQRSVRRRCLTFDMGGSHKRIPLRDSTNDLPLDSTSINKAPSPQNCLDTSKQDTDEILPIPRTIGLHLNGFVNPSVSSGRKKKKIKDGQAFPSTTFHYNIEDEFSTPVSTKRDLVVFSDVKIMEPPERSVEGECFDQLMAMENRQLSQGLDELGSCKRCKCRKSQCLKLYCECFSAGLFCGEPCSCQNCFNKPIHEDLVMKSREVIKARNPLAFAPKVVSTSDTVIDLWVENSKTPASARHKRGCNCRKSGCSKKYCECFMMGVGCSSNCRCMGCKNTFGHTNEQCAGDSDVVTINDEAKHYGDHGDASRQNEEILTSERNRLLLPGSVAFRSLTSLSNLSEL</sequence>
<protein>
    <recommendedName>
        <fullName>Protein tesmin/TSO1-like CXC 4</fullName>
        <shortName>AtTCX4</shortName>
    </recommendedName>
</protein>
<proteinExistence type="evidence at protein level"/>
<feature type="chain" id="PRO_0000418169" description="Protein tesmin/TSO1-like CXC 4">
    <location>
        <begin position="1"/>
        <end position="639"/>
    </location>
</feature>
<feature type="domain" description="CRC" evidence="2">
    <location>
        <begin position="451"/>
        <end position="576"/>
    </location>
</feature>
<feature type="region of interest" description="Disordered" evidence="3">
    <location>
        <begin position="282"/>
        <end position="301"/>
    </location>
</feature>
<feature type="region of interest" description="Disordered" evidence="3">
    <location>
        <begin position="313"/>
        <end position="347"/>
    </location>
</feature>
<feature type="compositionally biased region" description="Polar residues" evidence="3">
    <location>
        <begin position="329"/>
        <end position="345"/>
    </location>
</feature>
<keyword id="KW-0217">Developmental protein</keyword>
<keyword id="KW-0479">Metal-binding</keyword>
<keyword id="KW-0539">Nucleus</keyword>
<keyword id="KW-1185">Reference proteome</keyword>
<keyword id="KW-0862">Zinc</keyword>
<organism>
    <name type="scientific">Arabidopsis thaliana</name>
    <name type="common">Mouse-ear cress</name>
    <dbReference type="NCBI Taxonomy" id="3702"/>
    <lineage>
        <taxon>Eukaryota</taxon>
        <taxon>Viridiplantae</taxon>
        <taxon>Streptophyta</taxon>
        <taxon>Embryophyta</taxon>
        <taxon>Tracheophyta</taxon>
        <taxon>Spermatophyta</taxon>
        <taxon>Magnoliopsida</taxon>
        <taxon>eudicotyledons</taxon>
        <taxon>Gunneridae</taxon>
        <taxon>Pentapetalae</taxon>
        <taxon>rosids</taxon>
        <taxon>malvids</taxon>
        <taxon>Brassicales</taxon>
        <taxon>Brassicaceae</taxon>
        <taxon>Camelineae</taxon>
        <taxon>Arabidopsis</taxon>
    </lineage>
</organism>
<accession>Q84JZ8</accession>
<accession>Q9CAV1</accession>
<reference key="1">
    <citation type="journal article" date="2000" name="Nature">
        <title>Sequence and analysis of chromosome 3 of the plant Arabidopsis thaliana.</title>
        <authorList>
            <person name="Salanoubat M."/>
            <person name="Lemcke K."/>
            <person name="Rieger M."/>
            <person name="Ansorge W."/>
            <person name="Unseld M."/>
            <person name="Fartmann B."/>
            <person name="Valle G."/>
            <person name="Bloecker H."/>
            <person name="Perez-Alonso M."/>
            <person name="Obermaier B."/>
            <person name="Delseny M."/>
            <person name="Boutry M."/>
            <person name="Grivell L.A."/>
            <person name="Mache R."/>
            <person name="Puigdomenech P."/>
            <person name="De Simone V."/>
            <person name="Choisne N."/>
            <person name="Artiguenave F."/>
            <person name="Robert C."/>
            <person name="Brottier P."/>
            <person name="Wincker P."/>
            <person name="Cattolico L."/>
            <person name="Weissenbach J."/>
            <person name="Saurin W."/>
            <person name="Quetier F."/>
            <person name="Schaefer M."/>
            <person name="Mueller-Auer S."/>
            <person name="Gabel C."/>
            <person name="Fuchs M."/>
            <person name="Benes V."/>
            <person name="Wurmbach E."/>
            <person name="Drzonek H."/>
            <person name="Erfle H."/>
            <person name="Jordan N."/>
            <person name="Bangert S."/>
            <person name="Wiedelmann R."/>
            <person name="Kranz H."/>
            <person name="Voss H."/>
            <person name="Holland R."/>
            <person name="Brandt P."/>
            <person name="Nyakatura G."/>
            <person name="Vezzi A."/>
            <person name="D'Angelo M."/>
            <person name="Pallavicini A."/>
            <person name="Toppo S."/>
            <person name="Simionati B."/>
            <person name="Conrad A."/>
            <person name="Hornischer K."/>
            <person name="Kauer G."/>
            <person name="Loehnert T.-H."/>
            <person name="Nordsiek G."/>
            <person name="Reichelt J."/>
            <person name="Scharfe M."/>
            <person name="Schoen O."/>
            <person name="Bargues M."/>
            <person name="Terol J."/>
            <person name="Climent J."/>
            <person name="Navarro P."/>
            <person name="Collado C."/>
            <person name="Perez-Perez A."/>
            <person name="Ottenwaelder B."/>
            <person name="Duchemin D."/>
            <person name="Cooke R."/>
            <person name="Laudie M."/>
            <person name="Berger-Llauro C."/>
            <person name="Purnelle B."/>
            <person name="Masuy D."/>
            <person name="de Haan M."/>
            <person name="Maarse A.C."/>
            <person name="Alcaraz J.-P."/>
            <person name="Cottet A."/>
            <person name="Casacuberta E."/>
            <person name="Monfort A."/>
            <person name="Argiriou A."/>
            <person name="Flores M."/>
            <person name="Liguori R."/>
            <person name="Vitale D."/>
            <person name="Mannhaupt G."/>
            <person name="Haase D."/>
            <person name="Schoof H."/>
            <person name="Rudd S."/>
            <person name="Zaccaria P."/>
            <person name="Mewes H.-W."/>
            <person name="Mayer K.F.X."/>
            <person name="Kaul S."/>
            <person name="Town C.D."/>
            <person name="Koo H.L."/>
            <person name="Tallon L.J."/>
            <person name="Jenkins J."/>
            <person name="Rooney T."/>
            <person name="Rizzo M."/>
            <person name="Walts A."/>
            <person name="Utterback T."/>
            <person name="Fujii C.Y."/>
            <person name="Shea T.P."/>
            <person name="Creasy T.H."/>
            <person name="Haas B."/>
            <person name="Maiti R."/>
            <person name="Wu D."/>
            <person name="Peterson J."/>
            <person name="Van Aken S."/>
            <person name="Pai G."/>
            <person name="Militscher J."/>
            <person name="Sellers P."/>
            <person name="Gill J.E."/>
            <person name="Feldblyum T.V."/>
            <person name="Preuss D."/>
            <person name="Lin X."/>
            <person name="Nierman W.C."/>
            <person name="Salzberg S.L."/>
            <person name="White O."/>
            <person name="Venter J.C."/>
            <person name="Fraser C.M."/>
            <person name="Kaneko T."/>
            <person name="Nakamura Y."/>
            <person name="Sato S."/>
            <person name="Kato T."/>
            <person name="Asamizu E."/>
            <person name="Sasamoto S."/>
            <person name="Kimura T."/>
            <person name="Idesawa K."/>
            <person name="Kawashima K."/>
            <person name="Kishida Y."/>
            <person name="Kiyokawa C."/>
            <person name="Kohara M."/>
            <person name="Matsumoto M."/>
            <person name="Matsuno A."/>
            <person name="Muraki A."/>
            <person name="Nakayama S."/>
            <person name="Nakazaki N."/>
            <person name="Shinpo S."/>
            <person name="Takeuchi C."/>
            <person name="Wada T."/>
            <person name="Watanabe A."/>
            <person name="Yamada M."/>
            <person name="Yasuda M."/>
            <person name="Tabata S."/>
        </authorList>
    </citation>
    <scope>NUCLEOTIDE SEQUENCE [LARGE SCALE GENOMIC DNA]</scope>
    <source>
        <strain>cv. Columbia</strain>
    </source>
</reference>
<reference key="2">
    <citation type="journal article" date="2017" name="Plant J.">
        <title>Araport11: a complete reannotation of the Arabidopsis thaliana reference genome.</title>
        <authorList>
            <person name="Cheng C.Y."/>
            <person name="Krishnakumar V."/>
            <person name="Chan A.P."/>
            <person name="Thibaud-Nissen F."/>
            <person name="Schobel S."/>
            <person name="Town C.D."/>
        </authorList>
    </citation>
    <scope>GENOME REANNOTATION</scope>
    <source>
        <strain>cv. Columbia</strain>
    </source>
</reference>
<reference key="3">
    <citation type="journal article" date="2003" name="Science">
        <title>Empirical analysis of transcriptional activity in the Arabidopsis genome.</title>
        <authorList>
            <person name="Yamada K."/>
            <person name="Lim J."/>
            <person name="Dale J.M."/>
            <person name="Chen H."/>
            <person name="Shinn P."/>
            <person name="Palm C.J."/>
            <person name="Southwick A.M."/>
            <person name="Wu H.C."/>
            <person name="Kim C.J."/>
            <person name="Nguyen M."/>
            <person name="Pham P.K."/>
            <person name="Cheuk R.F."/>
            <person name="Karlin-Newmann G."/>
            <person name="Liu S.X."/>
            <person name="Lam B."/>
            <person name="Sakano H."/>
            <person name="Wu T."/>
            <person name="Yu G."/>
            <person name="Miranda M."/>
            <person name="Quach H.L."/>
            <person name="Tripp M."/>
            <person name="Chang C.H."/>
            <person name="Lee J.M."/>
            <person name="Toriumi M.J."/>
            <person name="Chan M.M."/>
            <person name="Tang C.C."/>
            <person name="Onodera C.S."/>
            <person name="Deng J.M."/>
            <person name="Akiyama K."/>
            <person name="Ansari Y."/>
            <person name="Arakawa T."/>
            <person name="Banh J."/>
            <person name="Banno F."/>
            <person name="Bowser L."/>
            <person name="Brooks S.Y."/>
            <person name="Carninci P."/>
            <person name="Chao Q."/>
            <person name="Choy N."/>
            <person name="Enju A."/>
            <person name="Goldsmith A.D."/>
            <person name="Gurjal M."/>
            <person name="Hansen N.F."/>
            <person name="Hayashizaki Y."/>
            <person name="Johnson-Hopson C."/>
            <person name="Hsuan V.W."/>
            <person name="Iida K."/>
            <person name="Karnes M."/>
            <person name="Khan S."/>
            <person name="Koesema E."/>
            <person name="Ishida J."/>
            <person name="Jiang P.X."/>
            <person name="Jones T."/>
            <person name="Kawai J."/>
            <person name="Kamiya A."/>
            <person name="Meyers C."/>
            <person name="Nakajima M."/>
            <person name="Narusaka M."/>
            <person name="Seki M."/>
            <person name="Sakurai T."/>
            <person name="Satou M."/>
            <person name="Tamse R."/>
            <person name="Vaysberg M."/>
            <person name="Wallender E.K."/>
            <person name="Wong C."/>
            <person name="Yamamura Y."/>
            <person name="Yuan S."/>
            <person name="Shinozaki K."/>
            <person name="Davis R.W."/>
            <person name="Theologis A."/>
            <person name="Ecker J.R."/>
        </authorList>
    </citation>
    <scope>NUCLEOTIDE SEQUENCE [LARGE SCALE MRNA]</scope>
    <source>
        <strain>cv. Columbia</strain>
    </source>
</reference>
<reference key="4">
    <citation type="journal article" date="2007" name="J. Exp. Bot.">
        <title>The conserved cysteine-rich domain of a tesmin/TSO1-like protein binds zinc in vitro and TSO1 is required for both male and female fertility in Arabidopsis thaliana.</title>
        <authorList>
            <person name="Andersen S.U."/>
            <person name="Algreen-Petersen R.G."/>
            <person name="Hoedl M."/>
            <person name="Jurkiewicz A."/>
            <person name="Cvitanich C."/>
            <person name="Braunschweig U."/>
            <person name="Schauser L."/>
            <person name="Oh S.A."/>
            <person name="Twell D."/>
            <person name="Jensen E.O."/>
        </authorList>
    </citation>
    <scope>GENE FAMILY</scope>
    <scope>NOMENCLATURE</scope>
    <scope>ZINC-BINDING</scope>
</reference>
<name>TCX4_ARATH</name>
<evidence type="ECO:0000250" key="1"/>
<evidence type="ECO:0000255" key="2">
    <source>
        <dbReference type="PROSITE-ProRule" id="PRU00971"/>
    </source>
</evidence>
<evidence type="ECO:0000256" key="3">
    <source>
        <dbReference type="SAM" id="MobiDB-lite"/>
    </source>
</evidence>
<evidence type="ECO:0000305" key="4"/>
<comment type="function">
    <text evidence="1">Plays a role in development of both male and female reproductive tissues.</text>
</comment>
<comment type="subcellular location">
    <subcellularLocation>
        <location evidence="4">Nucleus</location>
    </subcellularLocation>
</comment>
<comment type="domain">
    <text>The cysteine-rich domain CRC binds zinc in vitro.</text>
</comment>
<comment type="similarity">
    <text evidence="4">Belongs to the lin-54 family.</text>
</comment>
<comment type="sequence caution" evidence="4">
    <conflict type="erroneous gene model prediction">
        <sequence resource="EMBL-CDS" id="AAG51411"/>
    </conflict>
</comment>
<gene>
    <name type="primary">TCX4</name>
    <name type="ordered locus">At3g04850</name>
    <name type="ORF">T9J14.20</name>
</gene>